<organism>
    <name type="scientific">Vesicomyosocius okutanii subsp. Calyptogena okutanii (strain HA)</name>
    <dbReference type="NCBI Taxonomy" id="412965"/>
    <lineage>
        <taxon>Bacteria</taxon>
        <taxon>Pseudomonadati</taxon>
        <taxon>Pseudomonadota</taxon>
        <taxon>Gammaproteobacteria</taxon>
        <taxon>Candidatus Pseudothioglobaceae</taxon>
        <taxon>Candidatus Vesicomyosocius</taxon>
    </lineage>
</organism>
<sequence>MAHTVQTLSKLLKKTPDEVVTILANAGVDGKNSDSVISAEERKILMSSLSKRPIRRSSMSVFRKAGTKSNAVSVSDVKVKVRSKRLTQPITMIDEQSKVVANEMARAALAALDAGRNADEILLAQDARRLEMVRLQKAQVEVVEIQKETVKKVQEKEAEKKVEKLKTADKPKEGNKPKRLRNTSSDNNTRKQLHVARHNPNRRLKKKDRTHLSQKIQAEQAQHAFQKPIEKVIHEVAIVGNIKVTELAQKMATKAGEVLKVLMGMGVMVTLNDVIDQDTALLVVEEMGHKGIISVEETIEDVLIEQLKYNEHESARPPIVTIMGHVDHGKTSLLDYIRQAKVAHGEVGGITQHIGAYQVQSNGNIITFIDTPGHAAFSKMRFRGANVTDIVILVVAADDGVMPQTIESIKHTQIVGVPMIVAINKIDKEGTDVDKIKQVLSTYDVISEDWGGDVIMVPVSAHTGEGVDALLDAISLTAEILEFSAVSEGPAHGTVLEARLEKGRGKVTTILVQSGTLNKGDIMIAGFEYGKVKQIVDDKGKILKLAMPSMPVEVLGLSGVPNSGDEVIVVGSERKAREVADFRKSKDREVQLQKQQASKMENFLMKMEKGDISTVNVLLKADVRGSAQALIEALEELSTDEVRVKVVSSGVGGINNTDITLAATSSALVLGFNVRADAVARKTADNEGVRVEYYSIIYNLINDVKAIMSGLLSPELSENIIGIASVKNIFKSQKMGDIAGCMVDEGMVKRDSLIRVLRDSVVIFDGKLESLRRFKDDVNEVKSGTECGIGVLNYTDVQPGDQIEIFERVERARIL</sequence>
<proteinExistence type="inferred from homology"/>
<comment type="function">
    <text evidence="2">One of the essential components for the initiation of protein synthesis. Protects formylmethionyl-tRNA from spontaneous hydrolysis and promotes its binding to the 30S ribosomal subunits. Also involved in the hydrolysis of GTP during the formation of the 70S ribosomal complex.</text>
</comment>
<comment type="subcellular location">
    <subcellularLocation>
        <location evidence="2">Cytoplasm</location>
    </subcellularLocation>
</comment>
<comment type="similarity">
    <text evidence="2">Belongs to the TRAFAC class translation factor GTPase superfamily. Classic translation factor GTPase family. IF-2 subfamily.</text>
</comment>
<reference key="1">
    <citation type="journal article" date="2007" name="Curr. Biol.">
        <title>Reduced genome of the thioautotrophic intracellular symbiont in a deep-sea clam, Calyptogena okutanii.</title>
        <authorList>
            <person name="Kuwahara H."/>
            <person name="Yoshida T."/>
            <person name="Takaki Y."/>
            <person name="Shimamura S."/>
            <person name="Nishi S."/>
            <person name="Harada M."/>
            <person name="Matsuyama K."/>
            <person name="Takishita K."/>
            <person name="Kawato M."/>
            <person name="Uematsu K."/>
            <person name="Fujiwara Y."/>
            <person name="Sato T."/>
            <person name="Kato C."/>
            <person name="Kitagawa M."/>
            <person name="Kato I."/>
            <person name="Maruyama T."/>
        </authorList>
    </citation>
    <scope>NUCLEOTIDE SEQUENCE [LARGE SCALE GENOMIC DNA]</scope>
    <source>
        <strain>HA</strain>
    </source>
</reference>
<dbReference type="EMBL" id="AP009247">
    <property type="protein sequence ID" value="BAF61196.1"/>
    <property type="molecule type" value="Genomic_DNA"/>
</dbReference>
<dbReference type="RefSeq" id="WP_011929466.1">
    <property type="nucleotide sequence ID" value="NC_009465.1"/>
</dbReference>
<dbReference type="SMR" id="A5CXX6"/>
<dbReference type="STRING" id="412965.COSY_0059"/>
<dbReference type="KEGG" id="vok:COSY_0059"/>
<dbReference type="eggNOG" id="COG0532">
    <property type="taxonomic scope" value="Bacteria"/>
</dbReference>
<dbReference type="HOGENOM" id="CLU_006301_6_1_6"/>
<dbReference type="OrthoDB" id="9811804at2"/>
<dbReference type="Proteomes" id="UP000000247">
    <property type="component" value="Chromosome"/>
</dbReference>
<dbReference type="GO" id="GO:0005829">
    <property type="term" value="C:cytosol"/>
    <property type="evidence" value="ECO:0007669"/>
    <property type="project" value="TreeGrafter"/>
</dbReference>
<dbReference type="GO" id="GO:0005525">
    <property type="term" value="F:GTP binding"/>
    <property type="evidence" value="ECO:0007669"/>
    <property type="project" value="UniProtKB-KW"/>
</dbReference>
<dbReference type="GO" id="GO:0003924">
    <property type="term" value="F:GTPase activity"/>
    <property type="evidence" value="ECO:0007669"/>
    <property type="project" value="UniProtKB-UniRule"/>
</dbReference>
<dbReference type="GO" id="GO:0003743">
    <property type="term" value="F:translation initiation factor activity"/>
    <property type="evidence" value="ECO:0007669"/>
    <property type="project" value="UniProtKB-UniRule"/>
</dbReference>
<dbReference type="CDD" id="cd01887">
    <property type="entry name" value="IF2_eIF5B"/>
    <property type="match status" value="1"/>
</dbReference>
<dbReference type="CDD" id="cd03702">
    <property type="entry name" value="IF2_mtIF2_II"/>
    <property type="match status" value="1"/>
</dbReference>
<dbReference type="CDD" id="cd03692">
    <property type="entry name" value="mtIF2_IVc"/>
    <property type="match status" value="1"/>
</dbReference>
<dbReference type="FunFam" id="2.40.30.10:FF:000007">
    <property type="entry name" value="Translation initiation factor IF-2"/>
    <property type="match status" value="1"/>
</dbReference>
<dbReference type="FunFam" id="2.40.30.10:FF:000008">
    <property type="entry name" value="Translation initiation factor IF-2"/>
    <property type="match status" value="1"/>
</dbReference>
<dbReference type="FunFam" id="3.40.50.10050:FF:000001">
    <property type="entry name" value="Translation initiation factor IF-2"/>
    <property type="match status" value="1"/>
</dbReference>
<dbReference type="FunFam" id="3.40.50.300:FF:000019">
    <property type="entry name" value="Translation initiation factor IF-2"/>
    <property type="match status" value="1"/>
</dbReference>
<dbReference type="Gene3D" id="3.40.50.300">
    <property type="entry name" value="P-loop containing nucleotide triphosphate hydrolases"/>
    <property type="match status" value="1"/>
</dbReference>
<dbReference type="Gene3D" id="2.40.30.10">
    <property type="entry name" value="Translation factors"/>
    <property type="match status" value="2"/>
</dbReference>
<dbReference type="Gene3D" id="3.40.50.10050">
    <property type="entry name" value="Translation initiation factor IF- 2, domain 3"/>
    <property type="match status" value="1"/>
</dbReference>
<dbReference type="HAMAP" id="MF_00100_B">
    <property type="entry name" value="IF_2_B"/>
    <property type="match status" value="1"/>
</dbReference>
<dbReference type="InterPro" id="IPR053905">
    <property type="entry name" value="EF-G-like_DII"/>
</dbReference>
<dbReference type="InterPro" id="IPR044145">
    <property type="entry name" value="IF2_II"/>
</dbReference>
<dbReference type="InterPro" id="IPR006847">
    <property type="entry name" value="IF2_N"/>
</dbReference>
<dbReference type="InterPro" id="IPR027417">
    <property type="entry name" value="P-loop_NTPase"/>
</dbReference>
<dbReference type="InterPro" id="IPR005225">
    <property type="entry name" value="Small_GTP-bd"/>
</dbReference>
<dbReference type="InterPro" id="IPR000795">
    <property type="entry name" value="T_Tr_GTP-bd_dom"/>
</dbReference>
<dbReference type="InterPro" id="IPR000178">
    <property type="entry name" value="TF_IF2_bacterial-like"/>
</dbReference>
<dbReference type="InterPro" id="IPR015760">
    <property type="entry name" value="TIF_IF2"/>
</dbReference>
<dbReference type="InterPro" id="IPR023115">
    <property type="entry name" value="TIF_IF2_dom3"/>
</dbReference>
<dbReference type="InterPro" id="IPR036925">
    <property type="entry name" value="TIF_IF2_dom3_sf"/>
</dbReference>
<dbReference type="InterPro" id="IPR009000">
    <property type="entry name" value="Transl_B-barrel_sf"/>
</dbReference>
<dbReference type="NCBIfam" id="TIGR00487">
    <property type="entry name" value="IF-2"/>
    <property type="match status" value="1"/>
</dbReference>
<dbReference type="NCBIfam" id="TIGR00231">
    <property type="entry name" value="small_GTP"/>
    <property type="match status" value="1"/>
</dbReference>
<dbReference type="PANTHER" id="PTHR43381:SF5">
    <property type="entry name" value="TR-TYPE G DOMAIN-CONTAINING PROTEIN"/>
    <property type="match status" value="1"/>
</dbReference>
<dbReference type="PANTHER" id="PTHR43381">
    <property type="entry name" value="TRANSLATION INITIATION FACTOR IF-2-RELATED"/>
    <property type="match status" value="1"/>
</dbReference>
<dbReference type="Pfam" id="PF22042">
    <property type="entry name" value="EF-G_D2"/>
    <property type="match status" value="1"/>
</dbReference>
<dbReference type="Pfam" id="PF00009">
    <property type="entry name" value="GTP_EFTU"/>
    <property type="match status" value="1"/>
</dbReference>
<dbReference type="Pfam" id="PF11987">
    <property type="entry name" value="IF-2"/>
    <property type="match status" value="1"/>
</dbReference>
<dbReference type="Pfam" id="PF04760">
    <property type="entry name" value="IF2_N"/>
    <property type="match status" value="1"/>
</dbReference>
<dbReference type="SUPFAM" id="SSF52156">
    <property type="entry name" value="Initiation factor IF2/eIF5b, domain 3"/>
    <property type="match status" value="1"/>
</dbReference>
<dbReference type="SUPFAM" id="SSF52540">
    <property type="entry name" value="P-loop containing nucleoside triphosphate hydrolases"/>
    <property type="match status" value="1"/>
</dbReference>
<dbReference type="SUPFAM" id="SSF50447">
    <property type="entry name" value="Translation proteins"/>
    <property type="match status" value="2"/>
</dbReference>
<dbReference type="PROSITE" id="PS51722">
    <property type="entry name" value="G_TR_2"/>
    <property type="match status" value="1"/>
</dbReference>
<dbReference type="PROSITE" id="PS01176">
    <property type="entry name" value="IF2"/>
    <property type="match status" value="1"/>
</dbReference>
<name>IF2_VESOH</name>
<evidence type="ECO:0000250" key="1"/>
<evidence type="ECO:0000255" key="2">
    <source>
        <dbReference type="HAMAP-Rule" id="MF_00100"/>
    </source>
</evidence>
<evidence type="ECO:0000256" key="3">
    <source>
        <dbReference type="SAM" id="MobiDB-lite"/>
    </source>
</evidence>
<feature type="chain" id="PRO_0000335519" description="Translation initiation factor IF-2">
    <location>
        <begin position="1"/>
        <end position="815"/>
    </location>
</feature>
<feature type="domain" description="tr-type G">
    <location>
        <begin position="315"/>
        <end position="482"/>
    </location>
</feature>
<feature type="region of interest" description="Disordered" evidence="3">
    <location>
        <begin position="153"/>
        <end position="219"/>
    </location>
</feature>
<feature type="region of interest" description="G1" evidence="1">
    <location>
        <begin position="324"/>
        <end position="331"/>
    </location>
</feature>
<feature type="region of interest" description="G2" evidence="1">
    <location>
        <begin position="349"/>
        <end position="353"/>
    </location>
</feature>
<feature type="region of interest" description="G3" evidence="1">
    <location>
        <begin position="370"/>
        <end position="373"/>
    </location>
</feature>
<feature type="region of interest" description="G4" evidence="1">
    <location>
        <begin position="424"/>
        <end position="427"/>
    </location>
</feature>
<feature type="region of interest" description="G5" evidence="1">
    <location>
        <begin position="460"/>
        <end position="462"/>
    </location>
</feature>
<feature type="compositionally biased region" description="Basic and acidic residues" evidence="3">
    <location>
        <begin position="153"/>
        <end position="176"/>
    </location>
</feature>
<feature type="compositionally biased region" description="Basic residues" evidence="3">
    <location>
        <begin position="191"/>
        <end position="209"/>
    </location>
</feature>
<feature type="binding site" evidence="2">
    <location>
        <begin position="324"/>
        <end position="331"/>
    </location>
    <ligand>
        <name>GTP</name>
        <dbReference type="ChEBI" id="CHEBI:37565"/>
    </ligand>
</feature>
<feature type="binding site" evidence="2">
    <location>
        <begin position="370"/>
        <end position="374"/>
    </location>
    <ligand>
        <name>GTP</name>
        <dbReference type="ChEBI" id="CHEBI:37565"/>
    </ligand>
</feature>
<feature type="binding site" evidence="2">
    <location>
        <begin position="424"/>
        <end position="427"/>
    </location>
    <ligand>
        <name>GTP</name>
        <dbReference type="ChEBI" id="CHEBI:37565"/>
    </ligand>
</feature>
<protein>
    <recommendedName>
        <fullName evidence="2">Translation initiation factor IF-2</fullName>
    </recommendedName>
</protein>
<accession>A5CXX6</accession>
<keyword id="KW-0963">Cytoplasm</keyword>
<keyword id="KW-0342">GTP-binding</keyword>
<keyword id="KW-0396">Initiation factor</keyword>
<keyword id="KW-0547">Nucleotide-binding</keyword>
<keyword id="KW-0648">Protein biosynthesis</keyword>
<keyword id="KW-1185">Reference proteome</keyword>
<gene>
    <name evidence="2" type="primary">infB</name>
    <name type="ordered locus">COSY_0059</name>
</gene>